<organism>
    <name type="scientific">Caenorhabditis elegans</name>
    <dbReference type="NCBI Taxonomy" id="6239"/>
    <lineage>
        <taxon>Eukaryota</taxon>
        <taxon>Metazoa</taxon>
        <taxon>Ecdysozoa</taxon>
        <taxon>Nematoda</taxon>
        <taxon>Chromadorea</taxon>
        <taxon>Rhabditida</taxon>
        <taxon>Rhabditina</taxon>
        <taxon>Rhabditomorpha</taxon>
        <taxon>Rhabditoidea</taxon>
        <taxon>Rhabditidae</taxon>
        <taxon>Peloderinae</taxon>
        <taxon>Caenorhabditis</taxon>
    </lineage>
</organism>
<evidence type="ECO:0000250" key="1">
    <source>
        <dbReference type="UniProtKB" id="P04191"/>
    </source>
</evidence>
<evidence type="ECO:0000250" key="2">
    <source>
        <dbReference type="UniProtKB" id="P39524"/>
    </source>
</evidence>
<evidence type="ECO:0000250" key="3">
    <source>
        <dbReference type="UniProtKB" id="P40527"/>
    </source>
</evidence>
<evidence type="ECO:0000250" key="4">
    <source>
        <dbReference type="UniProtKB" id="Q8NB49"/>
    </source>
</evidence>
<evidence type="ECO:0000250" key="5">
    <source>
        <dbReference type="UniProtKB" id="Q9HD20"/>
    </source>
</evidence>
<evidence type="ECO:0000250" key="6">
    <source>
        <dbReference type="UniProtKB" id="Q9Y2Q0"/>
    </source>
</evidence>
<evidence type="ECO:0000255" key="7"/>
<evidence type="ECO:0000256" key="8">
    <source>
        <dbReference type="SAM" id="MobiDB-lite"/>
    </source>
</evidence>
<evidence type="ECO:0000269" key="9">
    <source>
    </source>
</evidence>
<evidence type="ECO:0000269" key="10">
    <source>
    </source>
</evidence>
<evidence type="ECO:0000305" key="11"/>
<evidence type="ECO:0000305" key="12">
    <source>
    </source>
</evidence>
<gene>
    <name type="primary">tat-5</name>
    <name type="ORF">F36H2.1</name>
</gene>
<name>TAT5_CAEEL</name>
<dbReference type="EC" id="7.6.2.1" evidence="12"/>
<dbReference type="EMBL" id="BX284601">
    <property type="protein sequence ID" value="CAB03079.2"/>
    <property type="molecule type" value="Genomic_DNA"/>
</dbReference>
<dbReference type="EMBL" id="BX284601">
    <property type="protein sequence ID" value="CAD92377.2"/>
    <property type="molecule type" value="Genomic_DNA"/>
</dbReference>
<dbReference type="EMBL" id="BX284601">
    <property type="protein sequence ID" value="CAJ43906.1"/>
    <property type="molecule type" value="Genomic_DNA"/>
</dbReference>
<dbReference type="PIR" id="T21891">
    <property type="entry name" value="T21891"/>
</dbReference>
<dbReference type="RefSeq" id="NP_001021457.1">
    <molecule id="G5EBH1-1"/>
    <property type="nucleotide sequence ID" value="NM_001026286.6"/>
</dbReference>
<dbReference type="RefSeq" id="NP_001021458.2">
    <molecule id="G5EBH1-2"/>
    <property type="nucleotide sequence ID" value="NM_001026287.7"/>
</dbReference>
<dbReference type="RefSeq" id="NP_001040665.1">
    <molecule id="G5EBH1-3"/>
    <property type="nucleotide sequence ID" value="NM_001047200.3"/>
</dbReference>
<dbReference type="SMR" id="G5EBH1"/>
<dbReference type="FunCoup" id="G5EBH1">
    <property type="interactions" value="2216"/>
</dbReference>
<dbReference type="STRING" id="6239.F36H2.1a.1"/>
<dbReference type="PaxDb" id="6239-F36H2.1a"/>
<dbReference type="PeptideAtlas" id="G5EBH1"/>
<dbReference type="EnsemblMetazoa" id="F36H2.1a.1">
    <molecule id="G5EBH1-1"/>
    <property type="protein sequence ID" value="F36H2.1a.1"/>
    <property type="gene ID" value="WBGene00009498"/>
</dbReference>
<dbReference type="EnsemblMetazoa" id="F36H2.1b.1">
    <molecule id="G5EBH1-2"/>
    <property type="protein sequence ID" value="F36H2.1b.1"/>
    <property type="gene ID" value="WBGene00009498"/>
</dbReference>
<dbReference type="EnsemblMetazoa" id="F36H2.1c.1">
    <molecule id="G5EBH1-3"/>
    <property type="protein sequence ID" value="F36H2.1c.1"/>
    <property type="gene ID" value="WBGene00009498"/>
</dbReference>
<dbReference type="GeneID" id="172748"/>
<dbReference type="KEGG" id="cel:CELE_F36H2.1"/>
<dbReference type="AGR" id="WB:WBGene00009498"/>
<dbReference type="CTD" id="172748"/>
<dbReference type="WormBase" id="F36H2.1a">
    <molecule id="G5EBH1-1"/>
    <property type="protein sequence ID" value="CE34183"/>
    <property type="gene ID" value="WBGene00009498"/>
    <property type="gene designation" value="tat-5"/>
</dbReference>
<dbReference type="WormBase" id="F36H2.1b">
    <molecule id="G5EBH1-2"/>
    <property type="protein sequence ID" value="CE53504"/>
    <property type="gene ID" value="WBGene00009498"/>
    <property type="gene designation" value="tat-5"/>
</dbReference>
<dbReference type="WormBase" id="F36H2.1c">
    <molecule id="G5EBH1-3"/>
    <property type="protein sequence ID" value="CE39367"/>
    <property type="gene ID" value="WBGene00009498"/>
    <property type="gene designation" value="tat-5"/>
</dbReference>
<dbReference type="eggNOG" id="KOG0210">
    <property type="taxonomic scope" value="Eukaryota"/>
</dbReference>
<dbReference type="GeneTree" id="ENSGT00940000168130"/>
<dbReference type="HOGENOM" id="CLU_000846_3_1_1"/>
<dbReference type="InParanoid" id="G5EBH1"/>
<dbReference type="OMA" id="IAITTWH"/>
<dbReference type="OrthoDB" id="377733at2759"/>
<dbReference type="PhylomeDB" id="G5EBH1"/>
<dbReference type="BRENDA" id="7.6.2.1">
    <property type="organism ID" value="1045"/>
</dbReference>
<dbReference type="Reactome" id="R-CEL-936837">
    <property type="pathway name" value="Ion transport by P-type ATPases"/>
</dbReference>
<dbReference type="PRO" id="PR:G5EBH1"/>
<dbReference type="Proteomes" id="UP000001940">
    <property type="component" value="Chromosome I"/>
</dbReference>
<dbReference type="Bgee" id="WBGene00009498">
    <property type="expression patterns" value="Expressed in pharyngeal muscle cell (C elegans) and 4 other cell types or tissues"/>
</dbReference>
<dbReference type="ExpressionAtlas" id="G5EBH1">
    <property type="expression patterns" value="baseline and differential"/>
</dbReference>
<dbReference type="GO" id="GO:0031410">
    <property type="term" value="C:cytoplasmic vesicle"/>
    <property type="evidence" value="ECO:0000314"/>
    <property type="project" value="WormBase"/>
</dbReference>
<dbReference type="GO" id="GO:0005768">
    <property type="term" value="C:endosome"/>
    <property type="evidence" value="ECO:0000318"/>
    <property type="project" value="GO_Central"/>
</dbReference>
<dbReference type="GO" id="GO:0005886">
    <property type="term" value="C:plasma membrane"/>
    <property type="evidence" value="ECO:0000314"/>
    <property type="project" value="WormBase"/>
</dbReference>
<dbReference type="GO" id="GO:0005802">
    <property type="term" value="C:trans-Golgi network"/>
    <property type="evidence" value="ECO:0000318"/>
    <property type="project" value="GO_Central"/>
</dbReference>
<dbReference type="GO" id="GO:0005524">
    <property type="term" value="F:ATP binding"/>
    <property type="evidence" value="ECO:0007669"/>
    <property type="project" value="UniProtKB-KW"/>
</dbReference>
<dbReference type="GO" id="GO:0016887">
    <property type="term" value="F:ATP hydrolysis activity"/>
    <property type="evidence" value="ECO:0007669"/>
    <property type="project" value="InterPro"/>
</dbReference>
<dbReference type="GO" id="GO:0140326">
    <property type="term" value="F:ATPase-coupled intramembrane lipid transporter activity"/>
    <property type="evidence" value="ECO:0000318"/>
    <property type="project" value="GO_Central"/>
</dbReference>
<dbReference type="GO" id="GO:0000287">
    <property type="term" value="F:magnesium ion binding"/>
    <property type="evidence" value="ECO:0007669"/>
    <property type="project" value="InterPro"/>
</dbReference>
<dbReference type="GO" id="GO:0009792">
    <property type="term" value="P:embryo development ending in birth or egg hatching"/>
    <property type="evidence" value="ECO:0000315"/>
    <property type="project" value="WormBase"/>
</dbReference>
<dbReference type="GO" id="GO:0006897">
    <property type="term" value="P:endocytosis"/>
    <property type="evidence" value="ECO:0000318"/>
    <property type="project" value="GO_Central"/>
</dbReference>
<dbReference type="GO" id="GO:0045332">
    <property type="term" value="P:phospholipid translocation"/>
    <property type="evidence" value="ECO:0000318"/>
    <property type="project" value="GO_Central"/>
</dbReference>
<dbReference type="GO" id="GO:0022414">
    <property type="term" value="P:reproductive process"/>
    <property type="evidence" value="ECO:0000315"/>
    <property type="project" value="WormBase"/>
</dbReference>
<dbReference type="GO" id="GO:0006890">
    <property type="term" value="P:retrograde vesicle-mediated transport, Golgi to endoplasmic reticulum"/>
    <property type="evidence" value="ECO:0000318"/>
    <property type="project" value="GO_Central"/>
</dbReference>
<dbReference type="CDD" id="cd07541">
    <property type="entry name" value="P-type_ATPase_APLT_Neo1-like"/>
    <property type="match status" value="1"/>
</dbReference>
<dbReference type="FunFam" id="3.40.1110.10:FF:000117">
    <property type="entry name" value="Phospholipid-transporting ATPase"/>
    <property type="match status" value="1"/>
</dbReference>
<dbReference type="FunFam" id="3.40.50.1000:FF:000009">
    <property type="entry name" value="Phospholipid-transporting ATPase"/>
    <property type="match status" value="1"/>
</dbReference>
<dbReference type="Gene3D" id="3.40.1110.10">
    <property type="entry name" value="Calcium-transporting ATPase, cytoplasmic domain N"/>
    <property type="match status" value="1"/>
</dbReference>
<dbReference type="Gene3D" id="2.70.150.10">
    <property type="entry name" value="Calcium-transporting ATPase, cytoplasmic transduction domain A"/>
    <property type="match status" value="1"/>
</dbReference>
<dbReference type="Gene3D" id="3.40.50.1000">
    <property type="entry name" value="HAD superfamily/HAD-like"/>
    <property type="match status" value="1"/>
</dbReference>
<dbReference type="InterPro" id="IPR023299">
    <property type="entry name" value="ATPase_P-typ_cyto_dom_N"/>
</dbReference>
<dbReference type="InterPro" id="IPR018303">
    <property type="entry name" value="ATPase_P-typ_P_site"/>
</dbReference>
<dbReference type="InterPro" id="IPR023298">
    <property type="entry name" value="ATPase_P-typ_TM_dom_sf"/>
</dbReference>
<dbReference type="InterPro" id="IPR008250">
    <property type="entry name" value="ATPase_P-typ_transduc_dom_A_sf"/>
</dbReference>
<dbReference type="InterPro" id="IPR036412">
    <property type="entry name" value="HAD-like_sf"/>
</dbReference>
<dbReference type="InterPro" id="IPR023214">
    <property type="entry name" value="HAD_sf"/>
</dbReference>
<dbReference type="InterPro" id="IPR006539">
    <property type="entry name" value="P-type_ATPase_IV"/>
</dbReference>
<dbReference type="InterPro" id="IPR032631">
    <property type="entry name" value="P-type_ATPase_N"/>
</dbReference>
<dbReference type="InterPro" id="IPR001757">
    <property type="entry name" value="P_typ_ATPase"/>
</dbReference>
<dbReference type="InterPro" id="IPR032630">
    <property type="entry name" value="P_typ_ATPase_c"/>
</dbReference>
<dbReference type="InterPro" id="IPR044492">
    <property type="entry name" value="P_typ_ATPase_HD_dom"/>
</dbReference>
<dbReference type="NCBIfam" id="TIGR01652">
    <property type="entry name" value="ATPase-Plipid"/>
    <property type="match status" value="1"/>
</dbReference>
<dbReference type="NCBIfam" id="TIGR01494">
    <property type="entry name" value="ATPase_P-type"/>
    <property type="match status" value="2"/>
</dbReference>
<dbReference type="PANTHER" id="PTHR24092:SF5">
    <property type="entry name" value="PHOSPHOLIPID-TRANSPORTING ATPASE"/>
    <property type="match status" value="1"/>
</dbReference>
<dbReference type="PANTHER" id="PTHR24092">
    <property type="entry name" value="PROBABLE PHOSPHOLIPID-TRANSPORTING ATPASE"/>
    <property type="match status" value="1"/>
</dbReference>
<dbReference type="Pfam" id="PF13246">
    <property type="entry name" value="Cation_ATPase"/>
    <property type="match status" value="1"/>
</dbReference>
<dbReference type="Pfam" id="PF00122">
    <property type="entry name" value="E1-E2_ATPase"/>
    <property type="match status" value="1"/>
</dbReference>
<dbReference type="Pfam" id="PF00702">
    <property type="entry name" value="Hydrolase"/>
    <property type="match status" value="1"/>
</dbReference>
<dbReference type="Pfam" id="PF16212">
    <property type="entry name" value="PhoLip_ATPase_C"/>
    <property type="match status" value="1"/>
</dbReference>
<dbReference type="Pfam" id="PF16209">
    <property type="entry name" value="PhoLip_ATPase_N"/>
    <property type="match status" value="1"/>
</dbReference>
<dbReference type="PRINTS" id="PR00119">
    <property type="entry name" value="CATATPASE"/>
</dbReference>
<dbReference type="SFLD" id="SFLDS00003">
    <property type="entry name" value="Haloacid_Dehalogenase"/>
    <property type="match status" value="1"/>
</dbReference>
<dbReference type="SFLD" id="SFLDF00027">
    <property type="entry name" value="p-type_atpase"/>
    <property type="match status" value="1"/>
</dbReference>
<dbReference type="SUPFAM" id="SSF81653">
    <property type="entry name" value="Calcium ATPase, transduction domain A"/>
    <property type="match status" value="1"/>
</dbReference>
<dbReference type="SUPFAM" id="SSF81665">
    <property type="entry name" value="Calcium ATPase, transmembrane domain M"/>
    <property type="match status" value="1"/>
</dbReference>
<dbReference type="SUPFAM" id="SSF56784">
    <property type="entry name" value="HAD-like"/>
    <property type="match status" value="1"/>
</dbReference>
<dbReference type="SUPFAM" id="SSF81660">
    <property type="entry name" value="Metal cation-transporting ATPase, ATP-binding domain N"/>
    <property type="match status" value="1"/>
</dbReference>
<dbReference type="PROSITE" id="PS00154">
    <property type="entry name" value="ATPASE_E1_E2"/>
    <property type="match status" value="1"/>
</dbReference>
<sequence>MGKRKKNDESSSSSSQKPCVSSSSDDFSVSFVRAEEDDVATTIRDKTASLKSNATHFSAASAAKGGMFDFRCCRSLFSRRRVLHSRTVRVGYGPVGHDANVTFTPNTVCNQKYNIFSFVPIVLFQQFKFFLNLYFLLMACSQFIPAIQIGAPITYWGPLGFVLTITLIREAFDDFVRYLRDRDLNSEKYEKLTRDGTRIEIRSADIEVGDVIIMHKDRRVPADVVLLRTTDKSGACFIRTDQLDGETDWKLRIPVPHTQHLPNEADIMELNCEVYAEKPQKDIHAFVGTLKITDDDNVQDGSLNVENVLWANTVVASGTAVGIVVYTGRETRSVMNTTLPESKVGLLDLEVNNLTKLLFCFVLVLSSVMVAMKGLDNLWYRYLMRFILLFSYIIPISLRVNLDMAKLFYSWQIGRDKHIPETVIRSSTIPEELGRISFLLSDKTGTLTKNEMHFKKIHLGTVAFSSDAFEEVGQHVRSAYAGRLAKHSFSAKLQNAVEAIALCHNVTPIFENGEISYQAASPDEVALVKWTETVGVRLASRDLHAMSLSVQLPNGQTLMKQFQILYVFPFTSETKRMGIIVKDETTDEVTLLMKGADTVMSGMVQYNDWLDEECSNMAREGLRTLVVARKPLSQAELEAFDRAYHAAKMSISDRSQNMANVVNRMLERDLQLLCLTGVEDRLQDQVTTSLELLRNAGIKIWMLTGDKLETAICIAKSSGLFSRSDNIHVFGNVHNRTDAHNELNNLRRKTDVALVMPGSALNVCLQYYEAEVAELVCACTAVVCCRCSPEQKAQIVQLLRKYRAPLRVAAIGDGGNDVSMIQAAHAGIGIDANEGKQASLAADFSITQFSHVCRLLLVHGRFCYKRSCALSQFVMHRGLIISTMQAIFSCVFYFASVSLYQGVLMVAYSTCYTMLPVFSLVVDRDVTATNALTYPELYKELGKGRSLSYKTFCIWVLISLYQGAVIMYGALLVFDADFIHVVSISFSALIVTELIMVAMTVHTWHWAMLLAQALSLGLYMISLILFDQYFDRQFVLSWVFISKTTAITAVSCLPLYIVKALRRKFSPPSYAKVN</sequence>
<keyword id="KW-0877">Alternative promoter usage</keyword>
<keyword id="KW-0025">Alternative splicing</keyword>
<keyword id="KW-0067">ATP-binding</keyword>
<keyword id="KW-1003">Cell membrane</keyword>
<keyword id="KW-0445">Lipid transport</keyword>
<keyword id="KW-0460">Magnesium</keyword>
<keyword id="KW-0472">Membrane</keyword>
<keyword id="KW-0479">Metal-binding</keyword>
<keyword id="KW-0547">Nucleotide-binding</keyword>
<keyword id="KW-1185">Reference proteome</keyword>
<keyword id="KW-1278">Translocase</keyword>
<keyword id="KW-0812">Transmembrane</keyword>
<keyword id="KW-1133">Transmembrane helix</keyword>
<keyword id="KW-0813">Transport</keyword>
<proteinExistence type="evidence at protein level"/>
<protein>
    <recommendedName>
        <fullName>Probable phospholipid-transporting ATPase tat-5</fullName>
        <ecNumber evidence="12">7.6.2.1</ecNumber>
    </recommendedName>
</protein>
<reference key="1">
    <citation type="journal article" date="1998" name="Science">
        <title>Genome sequence of the nematode C. elegans: a platform for investigating biology.</title>
        <authorList>
            <consortium name="The C. elegans sequencing consortium"/>
        </authorList>
    </citation>
    <scope>NUCLEOTIDE SEQUENCE [LARGE SCALE GENOMIC DNA] (ISOFORMS 1; 2 AND 3)</scope>
    <source>
        <strain>Bristol N2</strain>
    </source>
</reference>
<reference key="2">
    <citation type="journal article" date="2011" name="Curr. Biol.">
        <title>The P4-ATPase TAT-5 inhibits the budding of extracellular vesicles in C. elegans embryos.</title>
        <authorList>
            <person name="Wehman A.M."/>
            <person name="Poggioli C."/>
            <person name="Schweinsberg P."/>
            <person name="Grant B.D."/>
            <person name="Nance J."/>
        </authorList>
    </citation>
    <scope>FUNCTION</scope>
    <scope>SUBCELLULAR LOCATION</scope>
</reference>
<reference key="3">
    <citation type="journal article" date="2018" name="Nat. Commun.">
        <title>SNX3-retromer requires an evolutionary conserved MON2:DOPEY2:ATP9A complex to mediate Wntless sorting and Wnt secretion.</title>
        <authorList>
            <person name="McGough I.J."/>
            <person name="de Groot R.E.A."/>
            <person name="Jellett A.P."/>
            <person name="Betist M.C."/>
            <person name="Varandas K.C."/>
            <person name="Danson C.M."/>
            <person name="Heesom K.J."/>
            <person name="Korswagen H.C."/>
            <person name="Cullen P.J."/>
        </authorList>
    </citation>
    <scope>FUNCTION</scope>
    <scope>CATALYTIC ACTIVITY</scope>
    <scope>MUTAGENESIS OF GLU-246</scope>
</reference>
<feature type="chain" id="PRO_0000452344" description="Probable phospholipid-transporting ATPase tat-5">
    <location>
        <begin position="1"/>
        <end position="1074"/>
    </location>
</feature>
<feature type="transmembrane region" description="Helical" evidence="7">
    <location>
        <begin position="118"/>
        <end position="138"/>
    </location>
</feature>
<feature type="transmembrane region" description="Helical" evidence="7">
    <location>
        <begin position="143"/>
        <end position="163"/>
    </location>
</feature>
<feature type="transmembrane region" description="Helical" evidence="7">
    <location>
        <begin position="354"/>
        <end position="374"/>
    </location>
</feature>
<feature type="transmembrane region" description="Helical" evidence="7">
    <location>
        <begin position="378"/>
        <end position="398"/>
    </location>
</feature>
<feature type="transmembrane region" description="Helical" evidence="7">
    <location>
        <begin position="886"/>
        <end position="906"/>
    </location>
</feature>
<feature type="transmembrane region" description="Helical" evidence="7">
    <location>
        <begin position="954"/>
        <end position="974"/>
    </location>
</feature>
<feature type="transmembrane region" description="Helical" evidence="7">
    <location>
        <begin position="978"/>
        <end position="998"/>
    </location>
</feature>
<feature type="transmembrane region" description="Helical" evidence="7">
    <location>
        <begin position="1006"/>
        <end position="1026"/>
    </location>
</feature>
<feature type="transmembrane region" description="Helical" evidence="7">
    <location>
        <begin position="1038"/>
        <end position="1058"/>
    </location>
</feature>
<feature type="region of interest" description="Disordered" evidence="8">
    <location>
        <begin position="1"/>
        <end position="26"/>
    </location>
</feature>
<feature type="compositionally biased region" description="Low complexity" evidence="8">
    <location>
        <begin position="10"/>
        <end position="26"/>
    </location>
</feature>
<feature type="active site" description="4-aspartylphosphate intermediate" evidence="5">
    <location>
        <position position="442"/>
    </location>
</feature>
<feature type="binding site" evidence="6">
    <location>
        <position position="442"/>
    </location>
    <ligand>
        <name>ATP</name>
        <dbReference type="ChEBI" id="CHEBI:30616"/>
    </ligand>
</feature>
<feature type="binding site" evidence="6">
    <location>
        <position position="442"/>
    </location>
    <ligand>
        <name>Mg(2+)</name>
        <dbReference type="ChEBI" id="CHEBI:18420"/>
    </ligand>
</feature>
<feature type="binding site" evidence="6">
    <location>
        <position position="443"/>
    </location>
    <ligand>
        <name>ATP</name>
        <dbReference type="ChEBI" id="CHEBI:30616"/>
    </ligand>
</feature>
<feature type="binding site" evidence="3">
    <location>
        <position position="444"/>
    </location>
    <ligand>
        <name>ATP</name>
        <dbReference type="ChEBI" id="CHEBI:30616"/>
    </ligand>
</feature>
<feature type="binding site" evidence="6">
    <location>
        <position position="444"/>
    </location>
    <ligand>
        <name>Mg(2+)</name>
        <dbReference type="ChEBI" id="CHEBI:18420"/>
    </ligand>
</feature>
<feature type="binding site" evidence="1">
    <location>
        <position position="524"/>
    </location>
    <ligand>
        <name>ATP</name>
        <dbReference type="ChEBI" id="CHEBI:30616"/>
    </ligand>
</feature>
<feature type="binding site" evidence="6">
    <location>
        <position position="570"/>
    </location>
    <ligand>
        <name>ATP</name>
        <dbReference type="ChEBI" id="CHEBI:30616"/>
    </ligand>
</feature>
<feature type="binding site" evidence="3">
    <location>
        <position position="575"/>
    </location>
    <ligand>
        <name>ATP</name>
        <dbReference type="ChEBI" id="CHEBI:30616"/>
    </ligand>
</feature>
<feature type="binding site" evidence="1">
    <location>
        <position position="594"/>
    </location>
    <ligand>
        <name>ATP</name>
        <dbReference type="ChEBI" id="CHEBI:30616"/>
    </ligand>
</feature>
<feature type="binding site" evidence="1">
    <location>
        <position position="623"/>
    </location>
    <ligand>
        <name>ATP</name>
        <dbReference type="ChEBI" id="CHEBI:30616"/>
    </ligand>
</feature>
<feature type="binding site" evidence="2">
    <location>
        <position position="624"/>
    </location>
    <ligand>
        <name>ATP</name>
        <dbReference type="ChEBI" id="CHEBI:30616"/>
    </ligand>
</feature>
<feature type="binding site" evidence="1">
    <location>
        <position position="704"/>
    </location>
    <ligand>
        <name>ATP</name>
        <dbReference type="ChEBI" id="CHEBI:30616"/>
    </ligand>
</feature>
<feature type="binding site" evidence="1">
    <location>
        <position position="705"/>
    </location>
    <ligand>
        <name>ATP</name>
        <dbReference type="ChEBI" id="CHEBI:30616"/>
    </ligand>
</feature>
<feature type="binding site" evidence="1">
    <location>
        <position position="706"/>
    </location>
    <ligand>
        <name>ATP</name>
        <dbReference type="ChEBI" id="CHEBI:30616"/>
    </ligand>
</feature>
<feature type="binding site" evidence="1">
    <location>
        <position position="786"/>
    </location>
    <ligand>
        <name>ATP</name>
        <dbReference type="ChEBI" id="CHEBI:30616"/>
    </ligand>
</feature>
<feature type="binding site" evidence="1">
    <location>
        <position position="792"/>
    </location>
    <ligand>
        <name>ATP</name>
        <dbReference type="ChEBI" id="CHEBI:30616"/>
    </ligand>
</feature>
<feature type="binding site" evidence="4">
    <location>
        <position position="813"/>
    </location>
    <ligand>
        <name>Mg(2+)</name>
        <dbReference type="ChEBI" id="CHEBI:18420"/>
    </ligand>
</feature>
<feature type="binding site" evidence="6">
    <location>
        <position position="816"/>
    </location>
    <ligand>
        <name>ATP</name>
        <dbReference type="ChEBI" id="CHEBI:30616"/>
    </ligand>
</feature>
<feature type="binding site" evidence="1">
    <location>
        <position position="817"/>
    </location>
    <ligand>
        <name>ATP</name>
        <dbReference type="ChEBI" id="CHEBI:30616"/>
    </ligand>
</feature>
<feature type="binding site" evidence="4">
    <location>
        <position position="817"/>
    </location>
    <ligand>
        <name>Mg(2+)</name>
        <dbReference type="ChEBI" id="CHEBI:18420"/>
    </ligand>
</feature>
<feature type="splice variant" id="VSP_060963" description="In isoform 2.">
    <original>MGKRKKNDESSSSSSQKPCVSSSSDDFSVSFVRAEEDDVATTIRDKTASLKSNATHFSAASAAKGGMFDF</original>
    <variation>MRYSRLATSHEEADEYSRLLPMPDSEIGIEGSDDVYLLPSVSSTSSSTFSMT</variation>
    <location>
        <begin position="1"/>
        <end position="70"/>
    </location>
</feature>
<feature type="splice variant" id="VSP_060964" description="In isoform 3.">
    <original>FDFR</original>
    <variation>L</variation>
    <location>
        <begin position="68"/>
        <end position="71"/>
    </location>
</feature>
<feature type="mutagenesis site" description="Causes aberrant migration of QL neuroblast descendants toward the anterior part." evidence="10">
    <original>E</original>
    <variation>Q</variation>
    <location>
        <position position="246"/>
    </location>
</feature>
<accession>G5EBH1</accession>
<accession>G5EE81</accession>
<accession>G5EGE0</accession>
<comment type="function">
    <text evidence="9 10">Plays a role in regulating membrane trafficking of cargo proteins during embryogenesis (PubMed:22100064, PubMed:30213940). Regulates snx-3 retromer-mediated endosomal sorting of mig-14, a transporter of Wnt egl-20 morphogen (PubMed:30213940). Together with mon-2 and pad-1, may participate in the formation of endosomal carriers that direct mig-14 trafficking back to Golgi, away from lysosomal degradation. Required for Wnt egl-20 gradient formation along the anteroposterior body axis and migration of QL neuroblast descendants toward the posterior part (PubMed:30213940). Maintains phosphatidylethanolamine (PE) asymmetry at the cell membrane and prevents the budding of ectosome vesicles that affect intercellular communication and morphogenesis (PubMed:22100064).</text>
</comment>
<comment type="catalytic activity">
    <reaction evidence="12">
        <text>ATP + H2O + phospholipidSide 1 = ADP + phosphate + phospholipidSide 2.</text>
        <dbReference type="EC" id="7.6.2.1"/>
    </reaction>
</comment>
<comment type="cofactor">
    <cofactor evidence="3">
        <name>Mg(2+)</name>
        <dbReference type="ChEBI" id="CHEBI:18420"/>
    </cofactor>
</comment>
<comment type="subcellular location">
    <subcellularLocation>
        <location evidence="9">Cell membrane</location>
        <topology evidence="7">Multi-pass membrane protein</topology>
    </subcellularLocation>
</comment>
<comment type="alternative products">
    <event type="alternative promoter"/>
    <event type="alternative splicing"/>
    <isoform>
        <id>G5EBH1-1</id>
        <name>1</name>
        <sequence type="displayed"/>
    </isoform>
    <isoform>
        <id>G5EBH1-2</id>
        <name>2</name>
        <sequence type="described" ref="VSP_060963"/>
    </isoform>
    <isoform>
        <id>G5EBH1-3</id>
        <name>3</name>
        <sequence type="described" ref="VSP_060964"/>
    </isoform>
</comment>
<comment type="miscellaneous">
    <molecule>Isoform 2</molecule>
    <text evidence="11">Produced by alternative promoter usage and alternative splicing.</text>
</comment>
<comment type="miscellaneous">
    <molecule>Isoform 3</molecule>
    <text evidence="11">Produced by alternative splicing.</text>
</comment>
<comment type="similarity">
    <text evidence="11">Belongs to the cation transport ATPase (P-type) (TC 3.A.3) family. Type IV subfamily.</text>
</comment>